<gene>
    <name evidence="4" type="primary">atB</name>
    <name type="ORF">ATEG_06273</name>
</gene>
<dbReference type="EMBL" id="CH476602">
    <property type="protein sequence ID" value="EAU32817.1"/>
    <property type="molecule type" value="Genomic_DNA"/>
</dbReference>
<dbReference type="RefSeq" id="XP_001215451.1">
    <property type="nucleotide sequence ID" value="XM_001215451.1"/>
</dbReference>
<dbReference type="STRING" id="341663.Q0CJ61"/>
<dbReference type="EnsemblFungi" id="EAU32817">
    <property type="protein sequence ID" value="EAU32817"/>
    <property type="gene ID" value="ATEG_06273"/>
</dbReference>
<dbReference type="GeneID" id="4322097"/>
<dbReference type="VEuPathDB" id="FungiDB:ATEG_06273"/>
<dbReference type="eggNOG" id="KOG0255">
    <property type="taxonomic scope" value="Eukaryota"/>
</dbReference>
<dbReference type="HOGENOM" id="CLU_008455_11_5_1"/>
<dbReference type="OMA" id="YYVMLIW"/>
<dbReference type="OrthoDB" id="3561359at2759"/>
<dbReference type="Proteomes" id="UP000007963">
    <property type="component" value="Unassembled WGS sequence"/>
</dbReference>
<dbReference type="GO" id="GO:0005886">
    <property type="term" value="C:plasma membrane"/>
    <property type="evidence" value="ECO:0007669"/>
    <property type="project" value="UniProtKB-SubCell"/>
</dbReference>
<dbReference type="GO" id="GO:0022857">
    <property type="term" value="F:transmembrane transporter activity"/>
    <property type="evidence" value="ECO:0007669"/>
    <property type="project" value="InterPro"/>
</dbReference>
<dbReference type="GO" id="GO:0140115">
    <property type="term" value="P:export across plasma membrane"/>
    <property type="evidence" value="ECO:0007669"/>
    <property type="project" value="UniProtKB-ARBA"/>
</dbReference>
<dbReference type="GO" id="GO:0042908">
    <property type="term" value="P:xenobiotic transport"/>
    <property type="evidence" value="ECO:0007669"/>
    <property type="project" value="UniProtKB-ARBA"/>
</dbReference>
<dbReference type="CDD" id="cd17323">
    <property type="entry name" value="MFS_Tpo1_MDR_like"/>
    <property type="match status" value="1"/>
</dbReference>
<dbReference type="FunFam" id="1.20.1250.20:FF:000082">
    <property type="entry name" value="MFS multidrug transporter, putative"/>
    <property type="match status" value="1"/>
</dbReference>
<dbReference type="Gene3D" id="1.20.1250.20">
    <property type="entry name" value="MFS general substrate transporter like domains"/>
    <property type="match status" value="1"/>
</dbReference>
<dbReference type="InterPro" id="IPR011701">
    <property type="entry name" value="MFS"/>
</dbReference>
<dbReference type="InterPro" id="IPR020846">
    <property type="entry name" value="MFS_dom"/>
</dbReference>
<dbReference type="InterPro" id="IPR036259">
    <property type="entry name" value="MFS_trans_sf"/>
</dbReference>
<dbReference type="InterPro" id="IPR005829">
    <property type="entry name" value="Sugar_transporter_CS"/>
</dbReference>
<dbReference type="PANTHER" id="PTHR23502:SF7">
    <property type="entry name" value="DRUG_PROTON ANTIPORTER YHK8-RELATED"/>
    <property type="match status" value="1"/>
</dbReference>
<dbReference type="PANTHER" id="PTHR23502">
    <property type="entry name" value="MAJOR FACILITATOR SUPERFAMILY"/>
    <property type="match status" value="1"/>
</dbReference>
<dbReference type="Pfam" id="PF07690">
    <property type="entry name" value="MFS_1"/>
    <property type="match status" value="1"/>
</dbReference>
<dbReference type="SUPFAM" id="SSF103473">
    <property type="entry name" value="MFS general substrate transporter"/>
    <property type="match status" value="1"/>
</dbReference>
<dbReference type="PROSITE" id="PS50850">
    <property type="entry name" value="MFS"/>
    <property type="match status" value="1"/>
</dbReference>
<dbReference type="PROSITE" id="PS00216">
    <property type="entry name" value="SUGAR_TRANSPORT_1"/>
    <property type="match status" value="1"/>
</dbReference>
<sequence>MAPQLAGSSHSSSASDQAHRQSSDPALESGSDTHVGSIAPKTETDFLVSFTGDDDPRSPKHMSSARKWLIVAIVSSTRLGLSPMILAPLSEFYGRKPVYVVSMFFFVVWIIPCAVARNIETLIVARFFNGFAGAAFLSVAGGTVGDLFPKNKLQAPMMVYTASPFLGPELGPVIGNFINSYLDWRWSFYILLIWAFAQWVSISLLVPETYHPVLLRREAQRLRKETGDDRYYAPIEKMDRSIAQTIIRSCYRPFLLLTLEPMCLLLCLFCSVLLGVLYLFFGAFSLVFKDNHGFNLWQVGLSFLGITVGMIIGISTNPFWHRNFMRLLQNHEAKTGTVGSSEPEFRLPPAVGGAPLVTIGLLWFAWTTYPSVHWIVPIIGSGIFGAGVIMIFSGVFTFLVDAYPLYAASALAANSFSRSMFAAAFPLFGQAMFRNLGYQWAGFLLAMITLLLAPFPYIFYRWGAKIRQHSRYAGAK</sequence>
<proteinExistence type="inferred from homology"/>
<evidence type="ECO:0000255" key="1"/>
<evidence type="ECO:0000256" key="2">
    <source>
        <dbReference type="SAM" id="MobiDB-lite"/>
    </source>
</evidence>
<evidence type="ECO:0000269" key="3">
    <source>
    </source>
</evidence>
<evidence type="ECO:0000303" key="4">
    <source>
    </source>
</evidence>
<evidence type="ECO:0000305" key="5"/>
<keyword id="KW-1003">Cell membrane</keyword>
<keyword id="KW-0472">Membrane</keyword>
<keyword id="KW-1185">Reference proteome</keyword>
<keyword id="KW-0812">Transmembrane</keyword>
<keyword id="KW-1133">Transmembrane helix</keyword>
<keyword id="KW-0813">Transport</keyword>
<name>ATB_ASPTN</name>
<reference key="1">
    <citation type="submission" date="2005-09" db="EMBL/GenBank/DDBJ databases">
        <title>Annotation of the Aspergillus terreus NIH2624 genome.</title>
        <authorList>
            <person name="Birren B.W."/>
            <person name="Lander E.S."/>
            <person name="Galagan J.E."/>
            <person name="Nusbaum C."/>
            <person name="Devon K."/>
            <person name="Henn M."/>
            <person name="Ma L.-J."/>
            <person name="Jaffe D.B."/>
            <person name="Butler J."/>
            <person name="Alvarez P."/>
            <person name="Gnerre S."/>
            <person name="Grabherr M."/>
            <person name="Kleber M."/>
            <person name="Mauceli E.W."/>
            <person name="Brockman W."/>
            <person name="Rounsley S."/>
            <person name="Young S.K."/>
            <person name="LaButti K."/>
            <person name="Pushparaj V."/>
            <person name="DeCaprio D."/>
            <person name="Crawford M."/>
            <person name="Koehrsen M."/>
            <person name="Engels R."/>
            <person name="Montgomery P."/>
            <person name="Pearson M."/>
            <person name="Howarth C."/>
            <person name="Larson L."/>
            <person name="Luoma S."/>
            <person name="White J."/>
            <person name="Alvarado L."/>
            <person name="Kodira C.D."/>
            <person name="Zeng Q."/>
            <person name="Oleary S."/>
            <person name="Yandava C."/>
            <person name="Denning D.W."/>
            <person name="Nierman W.C."/>
            <person name="Milne T."/>
            <person name="Madden K."/>
        </authorList>
    </citation>
    <scope>NUCLEOTIDE SEQUENCE [LARGE SCALE GENOMIC DNA]</scope>
    <source>
        <strain>NIH 2624 / FGSC A1156</strain>
    </source>
</reference>
<reference key="2">
    <citation type="journal article" date="2014" name="Org. Lett.">
        <title>Molecular genetic characterization of terreic acid pathway in Aspergillus terreus.</title>
        <authorList>
            <person name="Guo C.J."/>
            <person name="Sun W.W."/>
            <person name="Bruno K.S."/>
            <person name="Wang C.C."/>
        </authorList>
    </citation>
    <scope>FUNCTION</scope>
    <scope>DISRUPTION PHENOTYPE</scope>
</reference>
<protein>
    <recommendedName>
        <fullName evidence="4">Efflux pump atB</fullName>
    </recommendedName>
    <alternativeName>
        <fullName evidence="4">Terreic acid biosynthesis cluster protein B</fullName>
    </alternativeName>
</protein>
<organism>
    <name type="scientific">Aspergillus terreus (strain NIH 2624 / FGSC A1156)</name>
    <dbReference type="NCBI Taxonomy" id="341663"/>
    <lineage>
        <taxon>Eukaryota</taxon>
        <taxon>Fungi</taxon>
        <taxon>Dikarya</taxon>
        <taxon>Ascomycota</taxon>
        <taxon>Pezizomycotina</taxon>
        <taxon>Eurotiomycetes</taxon>
        <taxon>Eurotiomycetidae</taxon>
        <taxon>Eurotiales</taxon>
        <taxon>Aspergillaceae</taxon>
        <taxon>Aspergillus</taxon>
        <taxon>Aspergillus subgen. Circumdati</taxon>
    </lineage>
</organism>
<comment type="function">
    <text evidence="3">Efflux pump that might be required for efficient secretion of terreic acid (PubMed:25265334).</text>
</comment>
<comment type="subcellular location">
    <subcellularLocation>
        <location evidence="5">Cell membrane</location>
        <topology evidence="1">Multi-pass membrane protein</topology>
    </subcellularLocation>
</comment>
<comment type="disruption phenotype">
    <text evidence="3">Greatly diminishes the production of terreic acid (PubMed:25265334).</text>
</comment>
<comment type="similarity">
    <text evidence="1">Belongs to the major facilitator superfamily.</text>
</comment>
<accession>Q0CJ61</accession>
<feature type="chain" id="PRO_0000437637" description="Efflux pump atB">
    <location>
        <begin position="1"/>
        <end position="476"/>
    </location>
</feature>
<feature type="transmembrane region" description="Helical" evidence="1">
    <location>
        <begin position="69"/>
        <end position="89"/>
    </location>
</feature>
<feature type="transmembrane region" description="Helical" evidence="1">
    <location>
        <begin position="96"/>
        <end position="116"/>
    </location>
</feature>
<feature type="transmembrane region" description="Helical" evidence="1">
    <location>
        <begin position="127"/>
        <end position="147"/>
    </location>
</feature>
<feature type="transmembrane region" description="Helical" evidence="1">
    <location>
        <begin position="186"/>
        <end position="206"/>
    </location>
</feature>
<feature type="transmembrane region" description="Helical" evidence="1">
    <location>
        <begin position="264"/>
        <end position="284"/>
    </location>
</feature>
<feature type="transmembrane region" description="Helical" evidence="1">
    <location>
        <begin position="294"/>
        <end position="314"/>
    </location>
</feature>
<feature type="transmembrane region" description="Helical" evidence="1">
    <location>
        <begin position="347"/>
        <end position="367"/>
    </location>
</feature>
<feature type="transmembrane region" description="Helical" evidence="1">
    <location>
        <begin position="372"/>
        <end position="392"/>
    </location>
</feature>
<feature type="transmembrane region" description="Helical" evidence="1">
    <location>
        <begin position="403"/>
        <end position="425"/>
    </location>
</feature>
<feature type="transmembrane region" description="Helical" evidence="1">
    <location>
        <begin position="440"/>
        <end position="460"/>
    </location>
</feature>
<feature type="region of interest" description="Disordered" evidence="2">
    <location>
        <begin position="1"/>
        <end position="38"/>
    </location>
</feature>